<keyword id="KW-0240">DNA-directed RNA polymerase</keyword>
<keyword id="KW-0548">Nucleotidyltransferase</keyword>
<keyword id="KW-0804">Transcription</keyword>
<keyword id="KW-0808">Transferase</keyword>
<evidence type="ECO:0000255" key="1">
    <source>
        <dbReference type="HAMAP-Rule" id="MF_00059"/>
    </source>
</evidence>
<organism>
    <name type="scientific">Vibrio cholerae serotype O1 (strain M66-2)</name>
    <dbReference type="NCBI Taxonomy" id="579112"/>
    <lineage>
        <taxon>Bacteria</taxon>
        <taxon>Pseudomonadati</taxon>
        <taxon>Pseudomonadota</taxon>
        <taxon>Gammaproteobacteria</taxon>
        <taxon>Vibrionales</taxon>
        <taxon>Vibrionaceae</taxon>
        <taxon>Vibrio</taxon>
    </lineage>
</organism>
<protein>
    <recommendedName>
        <fullName evidence="1">DNA-directed RNA polymerase subunit alpha</fullName>
        <shortName evidence="1">RNAP subunit alpha</shortName>
        <ecNumber evidence="1">2.7.7.6</ecNumber>
    </recommendedName>
    <alternativeName>
        <fullName evidence="1">RNA polymerase subunit alpha</fullName>
    </alternativeName>
    <alternativeName>
        <fullName evidence="1">Transcriptase subunit alpha</fullName>
    </alternativeName>
</protein>
<comment type="function">
    <text evidence="1">DNA-dependent RNA polymerase catalyzes the transcription of DNA into RNA using the four ribonucleoside triphosphates as substrates.</text>
</comment>
<comment type="catalytic activity">
    <reaction evidence="1">
        <text>RNA(n) + a ribonucleoside 5'-triphosphate = RNA(n+1) + diphosphate</text>
        <dbReference type="Rhea" id="RHEA:21248"/>
        <dbReference type="Rhea" id="RHEA-COMP:14527"/>
        <dbReference type="Rhea" id="RHEA-COMP:17342"/>
        <dbReference type="ChEBI" id="CHEBI:33019"/>
        <dbReference type="ChEBI" id="CHEBI:61557"/>
        <dbReference type="ChEBI" id="CHEBI:140395"/>
        <dbReference type="EC" id="2.7.7.6"/>
    </reaction>
</comment>
<comment type="subunit">
    <text evidence="1">Homodimer. The RNAP catalytic core consists of 2 alpha, 1 beta, 1 beta' and 1 omega subunit. When a sigma factor is associated with the core the holoenzyme is formed, which can initiate transcription.</text>
</comment>
<comment type="domain">
    <text evidence="1">The N-terminal domain is essential for RNAP assembly and basal transcription, whereas the C-terminal domain is involved in interaction with transcriptional regulators and with upstream promoter elements.</text>
</comment>
<comment type="similarity">
    <text evidence="1">Belongs to the RNA polymerase alpha chain family.</text>
</comment>
<sequence>MQGSVTEFLKPRLVDIEQISTTHAKVTLEPLERGFGHTLGNALRRILLSSMPGCAVTEVEIEGVLHEYSTKEGVQEDILEILLNLKGLAVRVAEGKDEVFITLNKSGSGPVVAGDITHDGDVEIVNPEHVICHLTSDNAAIAMRIKVERGRGYVPASARIHTEEDERPIGRLLVDATFSPVDKIAYSVEAARVEQRTDLDKLVIDMETNGTLEPEEAIRRAATILAEQLDAFVDLRDVRVPEEKEEKPEFDPILLRPVDDLELTVRSANCLKAEAIHYIGDLVQRTEVELLKTPNLGKKSLTEIKDVLASRGLSLGMRLENWPPASIAED</sequence>
<gene>
    <name evidence="1" type="primary">rpoA</name>
    <name type="ordered locus">VCM66_2491</name>
</gene>
<proteinExistence type="inferred from homology"/>
<name>RPOA_VIBCM</name>
<feature type="chain" id="PRO_1000196649" description="DNA-directed RNA polymerase subunit alpha">
    <location>
        <begin position="1"/>
        <end position="330"/>
    </location>
</feature>
<feature type="region of interest" description="Alpha N-terminal domain (alpha-NTD)" evidence="1">
    <location>
        <begin position="1"/>
        <end position="236"/>
    </location>
</feature>
<feature type="region of interest" description="Alpha C-terminal domain (alpha-CTD)" evidence="1">
    <location>
        <begin position="250"/>
        <end position="330"/>
    </location>
</feature>
<reference key="1">
    <citation type="journal article" date="2008" name="PLoS ONE">
        <title>A recalibrated molecular clock and independent origins for the cholera pandemic clones.</title>
        <authorList>
            <person name="Feng L."/>
            <person name="Reeves P.R."/>
            <person name="Lan R."/>
            <person name="Ren Y."/>
            <person name="Gao C."/>
            <person name="Zhou Z."/>
            <person name="Ren Y."/>
            <person name="Cheng J."/>
            <person name="Wang W."/>
            <person name="Wang J."/>
            <person name="Qian W."/>
            <person name="Li D."/>
            <person name="Wang L."/>
        </authorList>
    </citation>
    <scope>NUCLEOTIDE SEQUENCE [LARGE SCALE GENOMIC DNA]</scope>
    <source>
        <strain>M66-2</strain>
    </source>
</reference>
<dbReference type="EC" id="2.7.7.6" evidence="1"/>
<dbReference type="EMBL" id="CP001233">
    <property type="protein sequence ID" value="ACP06788.1"/>
    <property type="molecule type" value="Genomic_DNA"/>
</dbReference>
<dbReference type="RefSeq" id="WP_001162087.1">
    <property type="nucleotide sequence ID" value="NC_012578.1"/>
</dbReference>
<dbReference type="SMR" id="C3LRN3"/>
<dbReference type="GeneID" id="94012777"/>
<dbReference type="KEGG" id="vcm:VCM66_2491"/>
<dbReference type="HOGENOM" id="CLU_053084_0_0_6"/>
<dbReference type="Proteomes" id="UP000001217">
    <property type="component" value="Chromosome I"/>
</dbReference>
<dbReference type="GO" id="GO:0005737">
    <property type="term" value="C:cytoplasm"/>
    <property type="evidence" value="ECO:0007669"/>
    <property type="project" value="UniProtKB-ARBA"/>
</dbReference>
<dbReference type="GO" id="GO:0000428">
    <property type="term" value="C:DNA-directed RNA polymerase complex"/>
    <property type="evidence" value="ECO:0007669"/>
    <property type="project" value="UniProtKB-KW"/>
</dbReference>
<dbReference type="GO" id="GO:0003677">
    <property type="term" value="F:DNA binding"/>
    <property type="evidence" value="ECO:0007669"/>
    <property type="project" value="UniProtKB-UniRule"/>
</dbReference>
<dbReference type="GO" id="GO:0003899">
    <property type="term" value="F:DNA-directed RNA polymerase activity"/>
    <property type="evidence" value="ECO:0007669"/>
    <property type="project" value="UniProtKB-UniRule"/>
</dbReference>
<dbReference type="GO" id="GO:0046983">
    <property type="term" value="F:protein dimerization activity"/>
    <property type="evidence" value="ECO:0007669"/>
    <property type="project" value="InterPro"/>
</dbReference>
<dbReference type="GO" id="GO:0006351">
    <property type="term" value="P:DNA-templated transcription"/>
    <property type="evidence" value="ECO:0007669"/>
    <property type="project" value="UniProtKB-UniRule"/>
</dbReference>
<dbReference type="CDD" id="cd06928">
    <property type="entry name" value="RNAP_alpha_NTD"/>
    <property type="match status" value="1"/>
</dbReference>
<dbReference type="FunFam" id="1.10.150.20:FF:000001">
    <property type="entry name" value="DNA-directed RNA polymerase subunit alpha"/>
    <property type="match status" value="1"/>
</dbReference>
<dbReference type="FunFam" id="2.170.120.12:FF:000001">
    <property type="entry name" value="DNA-directed RNA polymerase subunit alpha"/>
    <property type="match status" value="1"/>
</dbReference>
<dbReference type="Gene3D" id="1.10.150.20">
    <property type="entry name" value="5' to 3' exonuclease, C-terminal subdomain"/>
    <property type="match status" value="1"/>
</dbReference>
<dbReference type="Gene3D" id="2.170.120.12">
    <property type="entry name" value="DNA-directed RNA polymerase, insert domain"/>
    <property type="match status" value="1"/>
</dbReference>
<dbReference type="Gene3D" id="3.30.1360.10">
    <property type="entry name" value="RNA polymerase, RBP11-like subunit"/>
    <property type="match status" value="1"/>
</dbReference>
<dbReference type="HAMAP" id="MF_00059">
    <property type="entry name" value="RNApol_bact_RpoA"/>
    <property type="match status" value="1"/>
</dbReference>
<dbReference type="InterPro" id="IPR011262">
    <property type="entry name" value="DNA-dir_RNA_pol_insert"/>
</dbReference>
<dbReference type="InterPro" id="IPR011263">
    <property type="entry name" value="DNA-dir_RNA_pol_RpoA/D/Rpb3"/>
</dbReference>
<dbReference type="InterPro" id="IPR011773">
    <property type="entry name" value="DNA-dir_RpoA"/>
</dbReference>
<dbReference type="InterPro" id="IPR036603">
    <property type="entry name" value="RBP11-like"/>
</dbReference>
<dbReference type="InterPro" id="IPR011260">
    <property type="entry name" value="RNAP_asu_C"/>
</dbReference>
<dbReference type="InterPro" id="IPR036643">
    <property type="entry name" value="RNApol_insert_sf"/>
</dbReference>
<dbReference type="NCBIfam" id="NF003513">
    <property type="entry name" value="PRK05182.1-2"/>
    <property type="match status" value="1"/>
</dbReference>
<dbReference type="NCBIfam" id="NF003519">
    <property type="entry name" value="PRK05182.2-5"/>
    <property type="match status" value="1"/>
</dbReference>
<dbReference type="NCBIfam" id="TIGR02027">
    <property type="entry name" value="rpoA"/>
    <property type="match status" value="1"/>
</dbReference>
<dbReference type="Pfam" id="PF01000">
    <property type="entry name" value="RNA_pol_A_bac"/>
    <property type="match status" value="1"/>
</dbReference>
<dbReference type="Pfam" id="PF03118">
    <property type="entry name" value="RNA_pol_A_CTD"/>
    <property type="match status" value="1"/>
</dbReference>
<dbReference type="Pfam" id="PF01193">
    <property type="entry name" value="RNA_pol_L"/>
    <property type="match status" value="1"/>
</dbReference>
<dbReference type="SMART" id="SM00662">
    <property type="entry name" value="RPOLD"/>
    <property type="match status" value="1"/>
</dbReference>
<dbReference type="SUPFAM" id="SSF47789">
    <property type="entry name" value="C-terminal domain of RNA polymerase alpha subunit"/>
    <property type="match status" value="1"/>
</dbReference>
<dbReference type="SUPFAM" id="SSF56553">
    <property type="entry name" value="Insert subdomain of RNA polymerase alpha subunit"/>
    <property type="match status" value="1"/>
</dbReference>
<dbReference type="SUPFAM" id="SSF55257">
    <property type="entry name" value="RBP11-like subunits of RNA polymerase"/>
    <property type="match status" value="1"/>
</dbReference>
<accession>C3LRN3</accession>